<gene>
    <name type="primary">MPK4</name>
    <name type="synonym">MAP2</name>
    <name type="synonym">MSRMK3</name>
    <name type="ordered locus">Os06g0699400</name>
    <name type="ordered locus">LOC_Os06g48590</name>
    <name evidence="7" type="ORF">OsJ_22520</name>
    <name type="ORF">P0468G03.11</name>
</gene>
<keyword id="KW-0067">ATP-binding</keyword>
<keyword id="KW-0418">Kinase</keyword>
<keyword id="KW-0547">Nucleotide-binding</keyword>
<keyword id="KW-0597">Phosphoprotein</keyword>
<keyword id="KW-1185">Reference proteome</keyword>
<keyword id="KW-0723">Serine/threonine-protein kinase</keyword>
<keyword id="KW-0346">Stress response</keyword>
<keyword id="KW-0808">Transferase</keyword>
<reference key="1">
    <citation type="journal article" date="2002" name="Plant Physiol.">
        <title>Two novel mitogen-activated protein signaling components, OsMEK1 and OsMAP1, are involved in a moderate low-temperature signaling pathway in rice.</title>
        <authorList>
            <person name="Wen J.-Q."/>
            <person name="Oono K."/>
            <person name="Imai R."/>
        </authorList>
    </citation>
    <scope>NUCLEOTIDE SEQUENCE [MRNA]</scope>
</reference>
<reference key="2">
    <citation type="journal article" date="2003" name="Biochem. Biophys. Res. Commun.">
        <title>Novel rice MAP kinases OsMSRMK3 and OsWJUMK1 involved in encountering diverse environmental stresses and developmental regulation.</title>
        <authorList>
            <person name="Agrawal G.K."/>
            <person name="Agrawal S.K."/>
            <person name="Shibato J."/>
            <person name="Iwahashi H."/>
            <person name="Rakwal R."/>
        </authorList>
    </citation>
    <scope>NUCLEOTIDE SEQUENCE [MRNA]</scope>
    <scope>TISSUE SPECIFICITY</scope>
    <scope>INDUCTION</scope>
    <source>
        <strain>cv. Nipponbare</strain>
        <tissue>Leaf</tissue>
    </source>
</reference>
<reference key="3">
    <citation type="submission" date="1999-11" db="EMBL/GenBank/DDBJ databases">
        <title>Molecular cloning and expression of a MAP kinase homologue from rice.</title>
        <authorList>
            <person name="Huang H.-J."/>
            <person name="Fu S.-F."/>
            <person name="Tai Y.-H."/>
            <person name="Huang D.-D."/>
            <person name="Kuo T.T."/>
        </authorList>
    </citation>
    <scope>NUCLEOTIDE SEQUENCE [MRNA]</scope>
</reference>
<reference key="4">
    <citation type="journal article" date="2005" name="Nature">
        <title>The map-based sequence of the rice genome.</title>
        <authorList>
            <consortium name="International rice genome sequencing project (IRGSP)"/>
        </authorList>
    </citation>
    <scope>NUCLEOTIDE SEQUENCE [LARGE SCALE GENOMIC DNA]</scope>
    <source>
        <strain>cv. Nipponbare</strain>
    </source>
</reference>
<reference key="5">
    <citation type="journal article" date="2008" name="Nucleic Acids Res.">
        <title>The rice annotation project database (RAP-DB): 2008 update.</title>
        <authorList>
            <consortium name="The rice annotation project (RAP)"/>
        </authorList>
    </citation>
    <scope>GENOME REANNOTATION</scope>
    <source>
        <strain>cv. Nipponbare</strain>
    </source>
</reference>
<reference key="6">
    <citation type="journal article" date="2013" name="Rice">
        <title>Improvement of the Oryza sativa Nipponbare reference genome using next generation sequence and optical map data.</title>
        <authorList>
            <person name="Kawahara Y."/>
            <person name="de la Bastide M."/>
            <person name="Hamilton J.P."/>
            <person name="Kanamori H."/>
            <person name="McCombie W.R."/>
            <person name="Ouyang S."/>
            <person name="Schwartz D.C."/>
            <person name="Tanaka T."/>
            <person name="Wu J."/>
            <person name="Zhou S."/>
            <person name="Childs K.L."/>
            <person name="Davidson R.M."/>
            <person name="Lin H."/>
            <person name="Quesada-Ocampo L."/>
            <person name="Vaillancourt B."/>
            <person name="Sakai H."/>
            <person name="Lee S.S."/>
            <person name="Kim J."/>
            <person name="Numa H."/>
            <person name="Itoh T."/>
            <person name="Buell C.R."/>
            <person name="Matsumoto T."/>
        </authorList>
    </citation>
    <scope>GENOME REANNOTATION</scope>
    <source>
        <strain>cv. Nipponbare</strain>
    </source>
</reference>
<reference key="7">
    <citation type="journal article" date="2005" name="PLoS Biol.">
        <title>The genomes of Oryza sativa: a history of duplications.</title>
        <authorList>
            <person name="Yu J."/>
            <person name="Wang J."/>
            <person name="Lin W."/>
            <person name="Li S."/>
            <person name="Li H."/>
            <person name="Zhou J."/>
            <person name="Ni P."/>
            <person name="Dong W."/>
            <person name="Hu S."/>
            <person name="Zeng C."/>
            <person name="Zhang J."/>
            <person name="Zhang Y."/>
            <person name="Li R."/>
            <person name="Xu Z."/>
            <person name="Li S."/>
            <person name="Li X."/>
            <person name="Zheng H."/>
            <person name="Cong L."/>
            <person name="Lin L."/>
            <person name="Yin J."/>
            <person name="Geng J."/>
            <person name="Li G."/>
            <person name="Shi J."/>
            <person name="Liu J."/>
            <person name="Lv H."/>
            <person name="Li J."/>
            <person name="Wang J."/>
            <person name="Deng Y."/>
            <person name="Ran L."/>
            <person name="Shi X."/>
            <person name="Wang X."/>
            <person name="Wu Q."/>
            <person name="Li C."/>
            <person name="Ren X."/>
            <person name="Wang J."/>
            <person name="Wang X."/>
            <person name="Li D."/>
            <person name="Liu D."/>
            <person name="Zhang X."/>
            <person name="Ji Z."/>
            <person name="Zhao W."/>
            <person name="Sun Y."/>
            <person name="Zhang Z."/>
            <person name="Bao J."/>
            <person name="Han Y."/>
            <person name="Dong L."/>
            <person name="Ji J."/>
            <person name="Chen P."/>
            <person name="Wu S."/>
            <person name="Liu J."/>
            <person name="Xiao Y."/>
            <person name="Bu D."/>
            <person name="Tan J."/>
            <person name="Yang L."/>
            <person name="Ye C."/>
            <person name="Zhang J."/>
            <person name="Xu J."/>
            <person name="Zhou Y."/>
            <person name="Yu Y."/>
            <person name="Zhang B."/>
            <person name="Zhuang S."/>
            <person name="Wei H."/>
            <person name="Liu B."/>
            <person name="Lei M."/>
            <person name="Yu H."/>
            <person name="Li Y."/>
            <person name="Xu H."/>
            <person name="Wei S."/>
            <person name="He X."/>
            <person name="Fang L."/>
            <person name="Zhang Z."/>
            <person name="Zhang Y."/>
            <person name="Huang X."/>
            <person name="Su Z."/>
            <person name="Tong W."/>
            <person name="Li J."/>
            <person name="Tong Z."/>
            <person name="Li S."/>
            <person name="Ye J."/>
            <person name="Wang L."/>
            <person name="Fang L."/>
            <person name="Lei T."/>
            <person name="Chen C.-S."/>
            <person name="Chen H.-C."/>
            <person name="Xu Z."/>
            <person name="Li H."/>
            <person name="Huang H."/>
            <person name="Zhang F."/>
            <person name="Xu H."/>
            <person name="Li N."/>
            <person name="Zhao C."/>
            <person name="Li S."/>
            <person name="Dong L."/>
            <person name="Huang Y."/>
            <person name="Li L."/>
            <person name="Xi Y."/>
            <person name="Qi Q."/>
            <person name="Li W."/>
            <person name="Zhang B."/>
            <person name="Hu W."/>
            <person name="Zhang Y."/>
            <person name="Tian X."/>
            <person name="Jiao Y."/>
            <person name="Liang X."/>
            <person name="Jin J."/>
            <person name="Gao L."/>
            <person name="Zheng W."/>
            <person name="Hao B."/>
            <person name="Liu S.-M."/>
            <person name="Wang W."/>
            <person name="Yuan L."/>
            <person name="Cao M."/>
            <person name="McDermott J."/>
            <person name="Samudrala R."/>
            <person name="Wang J."/>
            <person name="Wong G.K.-S."/>
            <person name="Yang H."/>
        </authorList>
    </citation>
    <scope>NUCLEOTIDE SEQUENCE [LARGE SCALE GENOMIC DNA]</scope>
    <source>
        <strain>cv. Nipponbare</strain>
    </source>
</reference>
<reference key="8">
    <citation type="journal article" date="2003" name="Science">
        <title>Collection, mapping, and annotation of over 28,000 cDNA clones from japonica rice.</title>
        <authorList>
            <consortium name="The rice full-length cDNA consortium"/>
        </authorList>
    </citation>
    <scope>NUCLEOTIDE SEQUENCE [LARGE SCALE MRNA]</scope>
    <source>
        <strain>cv. Nipponbare</strain>
    </source>
</reference>
<reference key="9">
    <citation type="journal article" date="2006" name="Mol. Plant Microbe Interact.">
        <title>Molecular analysis of the rice MAP kinase gene family in relation to Magnaporthe grisea infection.</title>
        <authorList>
            <person name="Reyna N.S."/>
            <person name="Yang Y."/>
        </authorList>
    </citation>
    <scope>INDUCTION</scope>
    <scope>NOMENCLATURE</scope>
</reference>
<organism>
    <name type="scientific">Oryza sativa subsp. japonica</name>
    <name type="common">Rice</name>
    <dbReference type="NCBI Taxonomy" id="39947"/>
    <lineage>
        <taxon>Eukaryota</taxon>
        <taxon>Viridiplantae</taxon>
        <taxon>Streptophyta</taxon>
        <taxon>Embryophyta</taxon>
        <taxon>Tracheophyta</taxon>
        <taxon>Spermatophyta</taxon>
        <taxon>Magnoliopsida</taxon>
        <taxon>Liliopsida</taxon>
        <taxon>Poales</taxon>
        <taxon>Poaceae</taxon>
        <taxon>BOP clade</taxon>
        <taxon>Oryzoideae</taxon>
        <taxon>Oryzeae</taxon>
        <taxon>Oryzinae</taxon>
        <taxon>Oryza</taxon>
        <taxon>Oryza sativa</taxon>
    </lineage>
</organism>
<name>MPK4_ORYSJ</name>
<protein>
    <recommendedName>
        <fullName>Mitogen-activated protein kinase 4</fullName>
        <shortName>MAP kinase 4</shortName>
        <ecNumber>2.7.11.24</ecNumber>
    </recommendedName>
    <alternativeName>
        <fullName>Multiple stress-responsive MAP kinase 3</fullName>
    </alternativeName>
    <alternativeName>
        <fullName>OsMAP2</fullName>
    </alternativeName>
    <alternativeName>
        <fullName>OsMSRMK3</fullName>
    </alternativeName>
</protein>
<feature type="chain" id="PRO_0000239747" description="Mitogen-activated protein kinase 4">
    <location>
        <begin position="1"/>
        <end position="369"/>
    </location>
</feature>
<feature type="domain" description="Protein kinase" evidence="2">
    <location>
        <begin position="32"/>
        <end position="319"/>
    </location>
</feature>
<feature type="short sequence motif" description="TXY">
    <location>
        <begin position="191"/>
        <end position="193"/>
    </location>
</feature>
<feature type="active site" description="Proton acceptor" evidence="2 3">
    <location>
        <position position="158"/>
    </location>
</feature>
<feature type="binding site" evidence="2">
    <location>
        <begin position="38"/>
        <end position="46"/>
    </location>
    <ligand>
        <name>ATP</name>
        <dbReference type="ChEBI" id="CHEBI:30616"/>
    </ligand>
</feature>
<feature type="binding site" evidence="2">
    <location>
        <position position="61"/>
    </location>
    <ligand>
        <name>ATP</name>
        <dbReference type="ChEBI" id="CHEBI:30616"/>
    </ligand>
</feature>
<feature type="modified residue" description="Phosphothreonine" evidence="1">
    <location>
        <position position="191"/>
    </location>
</feature>
<feature type="modified residue" description="Phosphotyrosine" evidence="1">
    <location>
        <position position="193"/>
    </location>
</feature>
<feature type="sequence conflict" description="In Ref. 2 and 3." evidence="6" ref="2 3">
    <original>A</original>
    <variation>V</variation>
    <location>
        <position position="2"/>
    </location>
</feature>
<feature type="sequence conflict" description="In Ref. 3; CAB61889." evidence="6" ref="3">
    <original>Y</original>
    <variation>V</variation>
    <location>
        <position position="32"/>
    </location>
</feature>
<feature type="sequence conflict" description="In Ref. 3; CAB61889." evidence="6" ref="3">
    <original>A</original>
    <variation>V</variation>
    <location>
        <position position="331"/>
    </location>
</feature>
<accession>Q5Z859</accession>
<accession>Q0D9T8</accession>
<accession>Q8H0P1</accession>
<accession>Q9FQM2</accession>
<accession>Q9SMA9</accession>
<proteinExistence type="evidence at transcript level"/>
<sequence length="369" mass="42244">MAMMVDPPNGMGNQGKHYYTMWQTLFEIDTKYVPIKPIGRGAYGIVCSSINRATNEKVAIKKINNVFDNRVDALRTLRELKLLRHLRHENVIALKDIMMPVHRRSFKDVYLVYELMDTDLHQIIKSSQPLSNDHCQYFLFQLLRGLKYLHSAGILHRDLKPGNLLVNANCDLKICDFGLARTNNTKGQFMTEYVVTRWYRAPELLLCCDNYGTSIDVWSVGCIFAELLGRKPIFPGTECLNQLKLIVNVLGTMSEADIEFIDNPKARKYIKTLPYTPGIPLTSMYPQAHPLAIDLLQKMLVFDPSKRISVTEALEHPYMSPLYDPSANPPAQVPIDLDIDENLGVDMIREMMWQEMLHYHPEVVAGVNM</sequence>
<evidence type="ECO:0000250" key="1"/>
<evidence type="ECO:0000255" key="2">
    <source>
        <dbReference type="PROSITE-ProRule" id="PRU00159"/>
    </source>
</evidence>
<evidence type="ECO:0000255" key="3">
    <source>
        <dbReference type="PROSITE-ProRule" id="PRU10027"/>
    </source>
</evidence>
<evidence type="ECO:0000269" key="4">
    <source>
    </source>
</evidence>
<evidence type="ECO:0000269" key="5">
    <source>
    </source>
</evidence>
<evidence type="ECO:0000305" key="6"/>
<evidence type="ECO:0000312" key="7">
    <source>
        <dbReference type="EMBL" id="EAZ38166.1"/>
    </source>
</evidence>
<dbReference type="EC" id="2.7.11.24"/>
<dbReference type="EMBL" id="AF216316">
    <property type="protein sequence ID" value="AAG40580.1"/>
    <property type="molecule type" value="mRNA"/>
</dbReference>
<dbReference type="EMBL" id="AJ512642">
    <property type="protein sequence ID" value="CAD54741.1"/>
    <property type="molecule type" value="mRNA"/>
</dbReference>
<dbReference type="EMBL" id="AJ251330">
    <property type="protein sequence ID" value="CAB61889.1"/>
    <property type="molecule type" value="mRNA"/>
</dbReference>
<dbReference type="EMBL" id="AP004278">
    <property type="protein sequence ID" value="BAD53997.1"/>
    <property type="molecule type" value="Genomic_DNA"/>
</dbReference>
<dbReference type="EMBL" id="AP008212">
    <property type="protein sequence ID" value="BAF20385.1"/>
    <property type="molecule type" value="Genomic_DNA"/>
</dbReference>
<dbReference type="EMBL" id="AP014962">
    <property type="protein sequence ID" value="BAS99326.1"/>
    <property type="molecule type" value="Genomic_DNA"/>
</dbReference>
<dbReference type="EMBL" id="CM000143">
    <property type="protein sequence ID" value="EAZ38166.1"/>
    <property type="molecule type" value="Genomic_DNA"/>
</dbReference>
<dbReference type="EMBL" id="AK071376">
    <property type="protein sequence ID" value="BAG92461.1"/>
    <property type="molecule type" value="mRNA"/>
</dbReference>
<dbReference type="RefSeq" id="XP_015643564.1">
    <property type="nucleotide sequence ID" value="XM_015788078.1"/>
</dbReference>
<dbReference type="RefSeq" id="XP_015643565.1">
    <property type="nucleotide sequence ID" value="XM_015788079.1"/>
</dbReference>
<dbReference type="RefSeq" id="XP_015643566.1">
    <property type="nucleotide sequence ID" value="XM_015788080.1"/>
</dbReference>
<dbReference type="SMR" id="Q5Z859"/>
<dbReference type="FunCoup" id="Q5Z859">
    <property type="interactions" value="2554"/>
</dbReference>
<dbReference type="STRING" id="39947.Q5Z859"/>
<dbReference type="PaxDb" id="39947-Q5Z859"/>
<dbReference type="EnsemblPlants" id="Os06t0699400-01">
    <property type="protein sequence ID" value="Os06t0699400-01"/>
    <property type="gene ID" value="Os06g0699400"/>
</dbReference>
<dbReference type="GeneID" id="4341956"/>
<dbReference type="Gramene" id="Os06t0699400-01">
    <property type="protein sequence ID" value="Os06t0699400-01"/>
    <property type="gene ID" value="Os06g0699400"/>
</dbReference>
<dbReference type="KEGG" id="dosa:Os06g0699400"/>
<dbReference type="KEGG" id="osa:4341956"/>
<dbReference type="eggNOG" id="KOG0660">
    <property type="taxonomic scope" value="Eukaryota"/>
</dbReference>
<dbReference type="HOGENOM" id="CLU_000288_181_1_1"/>
<dbReference type="InParanoid" id="Q5Z859"/>
<dbReference type="OMA" id="NRYTDLN"/>
<dbReference type="OrthoDB" id="192887at2759"/>
<dbReference type="Proteomes" id="UP000000763">
    <property type="component" value="Chromosome 6"/>
</dbReference>
<dbReference type="Proteomes" id="UP000007752">
    <property type="component" value="Chromosome 6"/>
</dbReference>
<dbReference type="Proteomes" id="UP000059680">
    <property type="component" value="Chromosome 6"/>
</dbReference>
<dbReference type="GO" id="GO:0005737">
    <property type="term" value="C:cytoplasm"/>
    <property type="evidence" value="ECO:0000318"/>
    <property type="project" value="GO_Central"/>
</dbReference>
<dbReference type="GO" id="GO:0005634">
    <property type="term" value="C:nucleus"/>
    <property type="evidence" value="ECO:0000318"/>
    <property type="project" value="GO_Central"/>
</dbReference>
<dbReference type="GO" id="GO:0005524">
    <property type="term" value="F:ATP binding"/>
    <property type="evidence" value="ECO:0007669"/>
    <property type="project" value="UniProtKB-KW"/>
</dbReference>
<dbReference type="GO" id="GO:0004707">
    <property type="term" value="F:MAP kinase activity"/>
    <property type="evidence" value="ECO:0007669"/>
    <property type="project" value="UniProtKB-EC"/>
</dbReference>
<dbReference type="GO" id="GO:0106310">
    <property type="term" value="F:protein serine kinase activity"/>
    <property type="evidence" value="ECO:0007669"/>
    <property type="project" value="RHEA"/>
</dbReference>
<dbReference type="GO" id="GO:0004674">
    <property type="term" value="F:protein serine/threonine kinase activity"/>
    <property type="evidence" value="ECO:0000318"/>
    <property type="project" value="GO_Central"/>
</dbReference>
<dbReference type="GO" id="GO:0035556">
    <property type="term" value="P:intracellular signal transduction"/>
    <property type="evidence" value="ECO:0000318"/>
    <property type="project" value="GO_Central"/>
</dbReference>
<dbReference type="CDD" id="cd07858">
    <property type="entry name" value="STKc_TEY_MAPK"/>
    <property type="match status" value="1"/>
</dbReference>
<dbReference type="FunFam" id="1.10.510.10:FF:000206">
    <property type="entry name" value="Mitogen-activated protein kinase"/>
    <property type="match status" value="1"/>
</dbReference>
<dbReference type="FunFam" id="3.30.200.20:FF:000046">
    <property type="entry name" value="Mitogen-activated protein kinase"/>
    <property type="match status" value="1"/>
</dbReference>
<dbReference type="Gene3D" id="3.30.200.20">
    <property type="entry name" value="Phosphorylase Kinase, domain 1"/>
    <property type="match status" value="1"/>
</dbReference>
<dbReference type="Gene3D" id="1.10.510.10">
    <property type="entry name" value="Transferase(Phosphotransferase) domain 1"/>
    <property type="match status" value="1"/>
</dbReference>
<dbReference type="InterPro" id="IPR011009">
    <property type="entry name" value="Kinase-like_dom_sf"/>
</dbReference>
<dbReference type="InterPro" id="IPR050117">
    <property type="entry name" value="MAP_kinase"/>
</dbReference>
<dbReference type="InterPro" id="IPR003527">
    <property type="entry name" value="MAP_kinase_CS"/>
</dbReference>
<dbReference type="InterPro" id="IPR000719">
    <property type="entry name" value="Prot_kinase_dom"/>
</dbReference>
<dbReference type="InterPro" id="IPR017441">
    <property type="entry name" value="Protein_kinase_ATP_BS"/>
</dbReference>
<dbReference type="InterPro" id="IPR008271">
    <property type="entry name" value="Ser/Thr_kinase_AS"/>
</dbReference>
<dbReference type="PANTHER" id="PTHR24055">
    <property type="entry name" value="MITOGEN-ACTIVATED PROTEIN KINASE"/>
    <property type="match status" value="1"/>
</dbReference>
<dbReference type="Pfam" id="PF00069">
    <property type="entry name" value="Pkinase"/>
    <property type="match status" value="1"/>
</dbReference>
<dbReference type="SMART" id="SM00220">
    <property type="entry name" value="S_TKc"/>
    <property type="match status" value="1"/>
</dbReference>
<dbReference type="SUPFAM" id="SSF56112">
    <property type="entry name" value="Protein kinase-like (PK-like)"/>
    <property type="match status" value="1"/>
</dbReference>
<dbReference type="PROSITE" id="PS01351">
    <property type="entry name" value="MAPK"/>
    <property type="match status" value="1"/>
</dbReference>
<dbReference type="PROSITE" id="PS00107">
    <property type="entry name" value="PROTEIN_KINASE_ATP"/>
    <property type="match status" value="1"/>
</dbReference>
<dbReference type="PROSITE" id="PS50011">
    <property type="entry name" value="PROTEIN_KINASE_DOM"/>
    <property type="match status" value="1"/>
</dbReference>
<dbReference type="PROSITE" id="PS00108">
    <property type="entry name" value="PROTEIN_KINASE_ST"/>
    <property type="match status" value="1"/>
</dbReference>
<comment type="catalytic activity">
    <reaction>
        <text>L-seryl-[protein] + ATP = O-phospho-L-seryl-[protein] + ADP + H(+)</text>
        <dbReference type="Rhea" id="RHEA:17989"/>
        <dbReference type="Rhea" id="RHEA-COMP:9863"/>
        <dbReference type="Rhea" id="RHEA-COMP:11604"/>
        <dbReference type="ChEBI" id="CHEBI:15378"/>
        <dbReference type="ChEBI" id="CHEBI:29999"/>
        <dbReference type="ChEBI" id="CHEBI:30616"/>
        <dbReference type="ChEBI" id="CHEBI:83421"/>
        <dbReference type="ChEBI" id="CHEBI:456216"/>
        <dbReference type="EC" id="2.7.11.24"/>
    </reaction>
</comment>
<comment type="catalytic activity">
    <reaction>
        <text>L-threonyl-[protein] + ATP = O-phospho-L-threonyl-[protein] + ADP + H(+)</text>
        <dbReference type="Rhea" id="RHEA:46608"/>
        <dbReference type="Rhea" id="RHEA-COMP:11060"/>
        <dbReference type="Rhea" id="RHEA-COMP:11605"/>
        <dbReference type="ChEBI" id="CHEBI:15378"/>
        <dbReference type="ChEBI" id="CHEBI:30013"/>
        <dbReference type="ChEBI" id="CHEBI:30616"/>
        <dbReference type="ChEBI" id="CHEBI:61977"/>
        <dbReference type="ChEBI" id="CHEBI:456216"/>
        <dbReference type="EC" id="2.7.11.24"/>
    </reaction>
</comment>
<comment type="activity regulation">
    <text evidence="1">Activated by threonine and tyrosine phosphorylation.</text>
</comment>
<comment type="tissue specificity">
    <text evidence="4">Expressed in leaves and panicles.</text>
</comment>
<comment type="induction">
    <text evidence="4 5">By stresses, hormones, heavy metals, phosphatase inhibitors and infection with rice blast fungus (M.grisea). Down-regulated by drought, high/low temperature and UV-C.</text>
</comment>
<comment type="domain">
    <text>The TXY motif contains the threonine and tyrosine residues whose phosphorylation activates the MAP kinases.</text>
</comment>
<comment type="PTM">
    <text evidence="1">Dually phosphorylated on Thr-191 and Tyr-193, which activates the enzyme.</text>
</comment>
<comment type="similarity">
    <text evidence="6">Belongs to the protein kinase superfamily. CMGC Ser/Thr protein kinase family. MAP kinase subfamily.</text>
</comment>